<keyword id="KW-0275">Fatty acid biosynthesis</keyword>
<keyword id="KW-0276">Fatty acid metabolism</keyword>
<keyword id="KW-0444">Lipid biosynthesis</keyword>
<keyword id="KW-0443">Lipid metabolism</keyword>
<keyword id="KW-0496">Mitochondrion</keyword>
<keyword id="KW-0521">NADP</keyword>
<keyword id="KW-0560">Oxidoreductase</keyword>
<keyword id="KW-1185">Reference proteome</keyword>
<keyword id="KW-0809">Transit peptide</keyword>
<gene>
    <name type="ORF">Y48A6B.9</name>
</gene>
<proteinExistence type="inferred from homology"/>
<reference key="1">
    <citation type="journal article" date="1998" name="Science">
        <title>Genome sequence of the nematode C. elegans: a platform for investigating biology.</title>
        <authorList>
            <consortium name="The C. elegans sequencing consortium"/>
        </authorList>
    </citation>
    <scope>NUCLEOTIDE SEQUENCE [LARGE SCALE GENOMIC DNA]</scope>
    <source>
        <strain>Bristol N2</strain>
    </source>
</reference>
<name>MECR2_CAEEL</name>
<organism>
    <name type="scientific">Caenorhabditis elegans</name>
    <dbReference type="NCBI Taxonomy" id="6239"/>
    <lineage>
        <taxon>Eukaryota</taxon>
        <taxon>Metazoa</taxon>
        <taxon>Ecdysozoa</taxon>
        <taxon>Nematoda</taxon>
        <taxon>Chromadorea</taxon>
        <taxon>Rhabditida</taxon>
        <taxon>Rhabditina</taxon>
        <taxon>Rhabditomorpha</taxon>
        <taxon>Rhabditoidea</taxon>
        <taxon>Rhabditidae</taxon>
        <taxon>Peloderinae</taxon>
        <taxon>Caenorhabditis</taxon>
    </lineage>
</organism>
<feature type="transit peptide" description="Mitochondrion" evidence="5">
    <location>
        <begin position="1"/>
        <end position="22"/>
    </location>
</feature>
<feature type="chain" id="PRO_0000000893" description="Enoyl-[acyl-carrier-protein] reductase, mitochondrial">
    <location>
        <begin position="23"/>
        <end position="346"/>
    </location>
</feature>
<feature type="active site" description="Proton donor" evidence="1">
    <location>
        <position position="59"/>
    </location>
</feature>
<feature type="binding site" evidence="1">
    <location>
        <position position="131"/>
    </location>
    <ligand>
        <name>NADP(+)</name>
        <dbReference type="ChEBI" id="CHEBI:58349"/>
    </ligand>
</feature>
<feature type="binding site" evidence="1">
    <location>
        <begin position="157"/>
        <end position="160"/>
    </location>
    <ligand>
        <name>NADP(+)</name>
        <dbReference type="ChEBI" id="CHEBI:58349"/>
    </ligand>
</feature>
<feature type="binding site" evidence="1">
    <location>
        <begin position="180"/>
        <end position="182"/>
    </location>
    <ligand>
        <name>NADP(+)</name>
        <dbReference type="ChEBI" id="CHEBI:58349"/>
    </ligand>
</feature>
<feature type="binding site" evidence="1">
    <location>
        <begin position="249"/>
        <end position="252"/>
    </location>
    <ligand>
        <name>NADP(+)</name>
        <dbReference type="ChEBI" id="CHEBI:58349"/>
    </ligand>
</feature>
<feature type="binding site" evidence="1">
    <location>
        <begin position="274"/>
        <end position="276"/>
    </location>
    <ligand>
        <name>NADP(+)</name>
        <dbReference type="ChEBI" id="CHEBI:58349"/>
    </ligand>
</feature>
<feature type="binding site" evidence="1">
    <location>
        <position position="332"/>
    </location>
    <ligand>
        <name>NADP(+)</name>
        <dbReference type="ChEBI" id="CHEBI:58349"/>
    </ligand>
</feature>
<dbReference type="EC" id="1.3.1.104"/>
<dbReference type="EMBL" id="AL023844">
    <property type="protein sequence ID" value="CAA19533.1"/>
    <property type="molecule type" value="Genomic_DNA"/>
</dbReference>
<dbReference type="PIR" id="T26986">
    <property type="entry name" value="T26986"/>
</dbReference>
<dbReference type="RefSeq" id="NP_001255097.1">
    <property type="nucleotide sequence ID" value="NM_001268168.3"/>
</dbReference>
<dbReference type="SMR" id="Q9XXC8"/>
<dbReference type="BioGRID" id="41720">
    <property type="interactions" value="2"/>
</dbReference>
<dbReference type="DIP" id="DIP-24981N"/>
<dbReference type="FunCoup" id="Q9XXC8">
    <property type="interactions" value="236"/>
</dbReference>
<dbReference type="IntAct" id="Q9XXC8">
    <property type="interactions" value="2"/>
</dbReference>
<dbReference type="MINT" id="Q9XXC8"/>
<dbReference type="STRING" id="6239.Y48A6B.9a.1"/>
<dbReference type="PaxDb" id="6239-Y48A6B.9a"/>
<dbReference type="PeptideAtlas" id="Q9XXC8"/>
<dbReference type="EnsemblMetazoa" id="Y48A6B.9a.1">
    <property type="protein sequence ID" value="Y48A6B.9a.1"/>
    <property type="gene ID" value="WBGene00012970"/>
</dbReference>
<dbReference type="GeneID" id="176534"/>
<dbReference type="KEGG" id="cel:CELE_Y48A6B.9"/>
<dbReference type="UCSC" id="Y48A6B.9">
    <property type="organism name" value="c. elegans"/>
</dbReference>
<dbReference type="AGR" id="WB:WBGene00012970"/>
<dbReference type="CTD" id="176534"/>
<dbReference type="WormBase" id="Y48A6B.9a">
    <property type="protein sequence ID" value="CE19192"/>
    <property type="gene ID" value="WBGene00012970"/>
</dbReference>
<dbReference type="eggNOG" id="KOG0025">
    <property type="taxonomic scope" value="Eukaryota"/>
</dbReference>
<dbReference type="HOGENOM" id="CLU_026673_17_1_1"/>
<dbReference type="InParanoid" id="Q9XXC8"/>
<dbReference type="OMA" id="PPTAWIM"/>
<dbReference type="OrthoDB" id="7482721at2759"/>
<dbReference type="PhylomeDB" id="Q9XXC8"/>
<dbReference type="BRENDA" id="1.3.1.38">
    <property type="organism ID" value="1045"/>
</dbReference>
<dbReference type="PRO" id="PR:Q9XXC8"/>
<dbReference type="Proteomes" id="UP000001940">
    <property type="component" value="Chromosome III"/>
</dbReference>
<dbReference type="Bgee" id="WBGene00012970">
    <property type="expression patterns" value="Expressed in larva and 2 other cell types or tissues"/>
</dbReference>
<dbReference type="ExpressionAtlas" id="Q9XXC8">
    <property type="expression patterns" value="baseline and differential"/>
</dbReference>
<dbReference type="GO" id="GO:0005739">
    <property type="term" value="C:mitochondrion"/>
    <property type="evidence" value="ECO:0000318"/>
    <property type="project" value="GO_Central"/>
</dbReference>
<dbReference type="GO" id="GO:0141148">
    <property type="term" value="F:enoyl-[acyl-carrier-protein] reductase (NADPH) activity"/>
    <property type="evidence" value="ECO:0007669"/>
    <property type="project" value="UniProtKB-EC"/>
</dbReference>
<dbReference type="GO" id="GO:0006633">
    <property type="term" value="P:fatty acid biosynthetic process"/>
    <property type="evidence" value="ECO:0007669"/>
    <property type="project" value="UniProtKB-KW"/>
</dbReference>
<dbReference type="GO" id="GO:0006631">
    <property type="term" value="P:fatty acid metabolic process"/>
    <property type="evidence" value="ECO:0000318"/>
    <property type="project" value="GO_Central"/>
</dbReference>
<dbReference type="CDD" id="cd08290">
    <property type="entry name" value="ETR"/>
    <property type="match status" value="1"/>
</dbReference>
<dbReference type="Gene3D" id="3.90.180.10">
    <property type="entry name" value="Medium-chain alcohol dehydrogenases, catalytic domain"/>
    <property type="match status" value="1"/>
</dbReference>
<dbReference type="Gene3D" id="3.40.50.720">
    <property type="entry name" value="NAD(P)-binding Rossmann-like Domain"/>
    <property type="match status" value="1"/>
</dbReference>
<dbReference type="InterPro" id="IPR013149">
    <property type="entry name" value="ADH-like_C"/>
</dbReference>
<dbReference type="InterPro" id="IPR013154">
    <property type="entry name" value="ADH-like_N"/>
</dbReference>
<dbReference type="InterPro" id="IPR011032">
    <property type="entry name" value="GroES-like_sf"/>
</dbReference>
<dbReference type="InterPro" id="IPR051034">
    <property type="entry name" value="Mito_Enoyl-ACP_Reductase"/>
</dbReference>
<dbReference type="InterPro" id="IPR036291">
    <property type="entry name" value="NAD(P)-bd_dom_sf"/>
</dbReference>
<dbReference type="InterPro" id="IPR020843">
    <property type="entry name" value="PKS_ER"/>
</dbReference>
<dbReference type="PANTHER" id="PTHR43981">
    <property type="entry name" value="ENOYL-[ACYL-CARRIER-PROTEIN] REDUCTASE, MITOCHONDRIAL"/>
    <property type="match status" value="1"/>
</dbReference>
<dbReference type="PANTHER" id="PTHR43981:SF1">
    <property type="entry name" value="ENOYL-[ACYL-CARRIER-PROTEIN] REDUCTASE, MITOCHONDRIAL"/>
    <property type="match status" value="1"/>
</dbReference>
<dbReference type="Pfam" id="PF08240">
    <property type="entry name" value="ADH_N"/>
    <property type="match status" value="1"/>
</dbReference>
<dbReference type="Pfam" id="PF00107">
    <property type="entry name" value="ADH_zinc_N"/>
    <property type="match status" value="1"/>
</dbReference>
<dbReference type="SMART" id="SM00829">
    <property type="entry name" value="PKS_ER"/>
    <property type="match status" value="1"/>
</dbReference>
<dbReference type="SUPFAM" id="SSF50129">
    <property type="entry name" value="GroES-like"/>
    <property type="match status" value="1"/>
</dbReference>
<dbReference type="SUPFAM" id="SSF51735">
    <property type="entry name" value="NAD(P)-binding Rossmann-fold domains"/>
    <property type="match status" value="1"/>
</dbReference>
<evidence type="ECO:0000250" key="1">
    <source>
        <dbReference type="UniProtKB" id="Q8WZM3"/>
    </source>
</evidence>
<evidence type="ECO:0000250" key="2">
    <source>
        <dbReference type="UniProtKB" id="Q9BV79"/>
    </source>
</evidence>
<evidence type="ECO:0000250" key="3">
    <source>
        <dbReference type="UniProtKB" id="Q9DCS3"/>
    </source>
</evidence>
<evidence type="ECO:0000250" key="4">
    <source>
        <dbReference type="UniProtKB" id="Q9V6U9"/>
    </source>
</evidence>
<evidence type="ECO:0000255" key="5"/>
<evidence type="ECO:0000305" key="6"/>
<sequence length="346" mass="37944">MQKTIRSQALIYRKFGDPLKVLQLETVEVPAEPGSGECLVEWLASPINPLDINRIQGNYAVRAELPVIGGSEGVGRVVKAGSGSRFKSGDHVTIFSANTPIWTEFGVVDDDELVKLDNRIPLDLAATLMINPPTAWIMLKKYVNLQKGDYIIQNSANSGVGRSVIEMCKALGYKSINIVRNRQNIEALKTDLWRIGADHVFTEEEFKGTSRQFLKSINVRPKLALNGVGGKSALQISSVLERGGTCVTYGGMSKKAHEFTTSALVFNDICVRGVAVGMWARQEEHLDEWNLCVDEVQKLAVAGKITAIPMEKVVLADHKTAIQKSLEGRSIKQLFVINSKASASHI</sequence>
<comment type="function">
    <text evidence="2 3 4">Catalyzes the NADPH-dependent reduction of trans-2-enoyl thioesters in mitochondrial fatty acid synthesis (fatty acid synthesis type II). Fatty acid chain elongation in mitochondria uses acyl carrier protein (ACP) as an acyl group carrier, but the enzyme accepts both ACP and CoA thioesters as substrates in vitro. May provide the octanoyl chain used for lipoic acid biosynthesis, regulating protein lipoylation and mitochondrial respiratory activity (By similarity). Involved in iron homeostasis; affecting Fe-S cluster assembly and ceramide metabolism (By similarity). Required for proper morphology and bioenergetic functions of mitochondria (By similarity). Required for maintenance of neurons (By similarity).</text>
</comment>
<comment type="catalytic activity">
    <reaction evidence="2">
        <text>a 2,3-saturated acyl-[ACP] + NADP(+) = a (2E)-enoyl-[ACP] + NADPH + H(+)</text>
        <dbReference type="Rhea" id="RHEA:22564"/>
        <dbReference type="Rhea" id="RHEA-COMP:9925"/>
        <dbReference type="Rhea" id="RHEA-COMP:9926"/>
        <dbReference type="ChEBI" id="CHEBI:15378"/>
        <dbReference type="ChEBI" id="CHEBI:57783"/>
        <dbReference type="ChEBI" id="CHEBI:58349"/>
        <dbReference type="ChEBI" id="CHEBI:78784"/>
        <dbReference type="ChEBI" id="CHEBI:78785"/>
        <dbReference type="EC" id="1.3.1.104"/>
    </reaction>
</comment>
<comment type="subunit">
    <text evidence="2">Homodimer.</text>
</comment>
<comment type="subcellular location">
    <subcellularLocation>
        <location evidence="2">Mitochondrion</location>
    </subcellularLocation>
</comment>
<comment type="similarity">
    <text evidence="6">Belongs to the zinc-containing alcohol dehydrogenase family. Quinone oxidoreductase subfamily.</text>
</comment>
<protein>
    <recommendedName>
        <fullName>Enoyl-[acyl-carrier-protein] reductase, mitochondrial</fullName>
        <ecNumber>1.3.1.104</ecNumber>
    </recommendedName>
    <alternativeName>
        <fullName>2-enoyl thioester reductase</fullName>
    </alternativeName>
</protein>
<accession>Q9XXC8</accession>